<feature type="chain" id="PRO_1000071423" description="Tryptophan synthase alpha chain">
    <location>
        <begin position="1"/>
        <end position="249"/>
    </location>
</feature>
<feature type="active site" description="Proton acceptor" evidence="1">
    <location>
        <position position="43"/>
    </location>
</feature>
<feature type="active site" description="Proton acceptor" evidence="1">
    <location>
        <position position="54"/>
    </location>
</feature>
<dbReference type="EC" id="4.2.1.20" evidence="1"/>
<dbReference type="EMBL" id="CP000814">
    <property type="protein sequence ID" value="ABV51925.1"/>
    <property type="molecule type" value="Genomic_DNA"/>
</dbReference>
<dbReference type="RefSeq" id="WP_002854645.1">
    <property type="nucleotide sequence ID" value="NC_009839.1"/>
</dbReference>
<dbReference type="SMR" id="A8FKD8"/>
<dbReference type="KEGG" id="cju:C8J_0326"/>
<dbReference type="HOGENOM" id="CLU_016734_0_0_7"/>
<dbReference type="UniPathway" id="UPA00035">
    <property type="reaction ID" value="UER00044"/>
</dbReference>
<dbReference type="GO" id="GO:0005829">
    <property type="term" value="C:cytosol"/>
    <property type="evidence" value="ECO:0007669"/>
    <property type="project" value="TreeGrafter"/>
</dbReference>
<dbReference type="GO" id="GO:0004834">
    <property type="term" value="F:tryptophan synthase activity"/>
    <property type="evidence" value="ECO:0007669"/>
    <property type="project" value="UniProtKB-UniRule"/>
</dbReference>
<dbReference type="CDD" id="cd04724">
    <property type="entry name" value="Tryptophan_synthase_alpha"/>
    <property type="match status" value="1"/>
</dbReference>
<dbReference type="Gene3D" id="3.20.20.70">
    <property type="entry name" value="Aldolase class I"/>
    <property type="match status" value="1"/>
</dbReference>
<dbReference type="HAMAP" id="MF_00131">
    <property type="entry name" value="Trp_synth_alpha"/>
    <property type="match status" value="1"/>
</dbReference>
<dbReference type="InterPro" id="IPR013785">
    <property type="entry name" value="Aldolase_TIM"/>
</dbReference>
<dbReference type="InterPro" id="IPR011060">
    <property type="entry name" value="RibuloseP-bd_barrel"/>
</dbReference>
<dbReference type="InterPro" id="IPR018204">
    <property type="entry name" value="Trp_synthase_alpha_AS"/>
</dbReference>
<dbReference type="InterPro" id="IPR002028">
    <property type="entry name" value="Trp_synthase_suA"/>
</dbReference>
<dbReference type="NCBIfam" id="TIGR00262">
    <property type="entry name" value="trpA"/>
    <property type="match status" value="1"/>
</dbReference>
<dbReference type="PANTHER" id="PTHR43406:SF1">
    <property type="entry name" value="TRYPTOPHAN SYNTHASE ALPHA CHAIN, CHLOROPLASTIC"/>
    <property type="match status" value="1"/>
</dbReference>
<dbReference type="PANTHER" id="PTHR43406">
    <property type="entry name" value="TRYPTOPHAN SYNTHASE, ALPHA CHAIN"/>
    <property type="match status" value="1"/>
</dbReference>
<dbReference type="Pfam" id="PF00290">
    <property type="entry name" value="Trp_syntA"/>
    <property type="match status" value="1"/>
</dbReference>
<dbReference type="SUPFAM" id="SSF51366">
    <property type="entry name" value="Ribulose-phoshate binding barrel"/>
    <property type="match status" value="1"/>
</dbReference>
<dbReference type="PROSITE" id="PS00167">
    <property type="entry name" value="TRP_SYNTHASE_ALPHA"/>
    <property type="match status" value="1"/>
</dbReference>
<organism>
    <name type="scientific">Campylobacter jejuni subsp. jejuni serotype O:6 (strain 81116 / NCTC 11828)</name>
    <dbReference type="NCBI Taxonomy" id="407148"/>
    <lineage>
        <taxon>Bacteria</taxon>
        <taxon>Pseudomonadati</taxon>
        <taxon>Campylobacterota</taxon>
        <taxon>Epsilonproteobacteria</taxon>
        <taxon>Campylobacterales</taxon>
        <taxon>Campylobacteraceae</taxon>
        <taxon>Campylobacter</taxon>
    </lineage>
</organism>
<accession>A8FKD8</accession>
<keyword id="KW-0028">Amino-acid biosynthesis</keyword>
<keyword id="KW-0057">Aromatic amino acid biosynthesis</keyword>
<keyword id="KW-0456">Lyase</keyword>
<keyword id="KW-0822">Tryptophan biosynthesis</keyword>
<proteinExistence type="inferred from homology"/>
<evidence type="ECO:0000255" key="1">
    <source>
        <dbReference type="HAMAP-Rule" id="MF_00131"/>
    </source>
</evidence>
<gene>
    <name evidence="1" type="primary">trpA</name>
    <name type="ordered locus">C8J_0326</name>
</gene>
<name>TRPA_CAMJ8</name>
<protein>
    <recommendedName>
        <fullName evidence="1">Tryptophan synthase alpha chain</fullName>
        <ecNumber evidence="1">4.2.1.20</ecNumber>
    </recommendedName>
</protein>
<comment type="function">
    <text evidence="1">The alpha subunit is responsible for the aldol cleavage of indoleglycerol phosphate to indole and glyceraldehyde 3-phosphate.</text>
</comment>
<comment type="catalytic activity">
    <reaction evidence="1">
        <text>(1S,2R)-1-C-(indol-3-yl)glycerol 3-phosphate + L-serine = D-glyceraldehyde 3-phosphate + L-tryptophan + H2O</text>
        <dbReference type="Rhea" id="RHEA:10532"/>
        <dbReference type="ChEBI" id="CHEBI:15377"/>
        <dbReference type="ChEBI" id="CHEBI:33384"/>
        <dbReference type="ChEBI" id="CHEBI:57912"/>
        <dbReference type="ChEBI" id="CHEBI:58866"/>
        <dbReference type="ChEBI" id="CHEBI:59776"/>
        <dbReference type="EC" id="4.2.1.20"/>
    </reaction>
</comment>
<comment type="pathway">
    <text evidence="1">Amino-acid biosynthesis; L-tryptophan biosynthesis; L-tryptophan from chorismate: step 5/5.</text>
</comment>
<comment type="subunit">
    <text evidence="1">Tetramer of two alpha and two beta chains.</text>
</comment>
<comment type="similarity">
    <text evidence="1">Belongs to the TrpA family.</text>
</comment>
<sequence>MVDFRKFYKENANVAYTVLGYPNLQTSEAFLQRLDQSPIDILELGVAYSDPIADGEIIADAAKIALDQGVDIHSVFELLARIKTKKALVFMVYYNLIFSYGLEKFVKKAKSLGICALIVPELSFEESDDLIKECERYNIALITLVSVTTPKERVKKLVKHAKGFIYLLASIGITGTKSVEEAILQDKVKEIRSFTNLPIFVGFGIQNNQDVKRMRKVADGVIVGTSIVKCFKQGNLDIIMKDIEEIFKK</sequence>
<reference key="1">
    <citation type="journal article" date="2007" name="J. Bacteriol.">
        <title>The complete genome sequence of Campylobacter jejuni strain 81116 (NCTC11828).</title>
        <authorList>
            <person name="Pearson B.M."/>
            <person name="Gaskin D.J.H."/>
            <person name="Segers R.P.A.M."/>
            <person name="Wells J.M."/>
            <person name="Nuijten P.J.M."/>
            <person name="van Vliet A.H.M."/>
        </authorList>
    </citation>
    <scope>NUCLEOTIDE SEQUENCE [LARGE SCALE GENOMIC DNA]</scope>
    <source>
        <strain>81116 / NCTC 11828</strain>
    </source>
</reference>